<organism>
    <name type="scientific">Francisella philomiragia subsp. philomiragia (strain ATCC 25017 / CCUG 19701 / FSC 153 / O#319-036)</name>
    <dbReference type="NCBI Taxonomy" id="484022"/>
    <lineage>
        <taxon>Bacteria</taxon>
        <taxon>Pseudomonadati</taxon>
        <taxon>Pseudomonadota</taxon>
        <taxon>Gammaproteobacteria</taxon>
        <taxon>Thiotrichales</taxon>
        <taxon>Francisellaceae</taxon>
        <taxon>Francisella</taxon>
    </lineage>
</organism>
<evidence type="ECO:0000255" key="1">
    <source>
        <dbReference type="HAMAP-Rule" id="MF_00321"/>
    </source>
</evidence>
<dbReference type="EMBL" id="CP000937">
    <property type="protein sequence ID" value="ABZ87771.1"/>
    <property type="molecule type" value="Genomic_DNA"/>
</dbReference>
<dbReference type="SMR" id="B0TZB8"/>
<dbReference type="KEGG" id="fph:Fphi_1545"/>
<dbReference type="eggNOG" id="COG0218">
    <property type="taxonomic scope" value="Bacteria"/>
</dbReference>
<dbReference type="HOGENOM" id="CLU_033732_3_0_6"/>
<dbReference type="GO" id="GO:0005829">
    <property type="term" value="C:cytosol"/>
    <property type="evidence" value="ECO:0007669"/>
    <property type="project" value="TreeGrafter"/>
</dbReference>
<dbReference type="GO" id="GO:0005525">
    <property type="term" value="F:GTP binding"/>
    <property type="evidence" value="ECO:0007669"/>
    <property type="project" value="UniProtKB-UniRule"/>
</dbReference>
<dbReference type="GO" id="GO:0046872">
    <property type="term" value="F:metal ion binding"/>
    <property type="evidence" value="ECO:0007669"/>
    <property type="project" value="UniProtKB-KW"/>
</dbReference>
<dbReference type="GO" id="GO:0000917">
    <property type="term" value="P:division septum assembly"/>
    <property type="evidence" value="ECO:0007669"/>
    <property type="project" value="UniProtKB-KW"/>
</dbReference>
<dbReference type="CDD" id="cd01876">
    <property type="entry name" value="YihA_EngB"/>
    <property type="match status" value="1"/>
</dbReference>
<dbReference type="FunFam" id="3.40.50.300:FF:000098">
    <property type="entry name" value="Probable GTP-binding protein EngB"/>
    <property type="match status" value="1"/>
</dbReference>
<dbReference type="Gene3D" id="3.40.50.300">
    <property type="entry name" value="P-loop containing nucleotide triphosphate hydrolases"/>
    <property type="match status" value="1"/>
</dbReference>
<dbReference type="HAMAP" id="MF_00321">
    <property type="entry name" value="GTPase_EngB"/>
    <property type="match status" value="1"/>
</dbReference>
<dbReference type="InterPro" id="IPR030393">
    <property type="entry name" value="G_ENGB_dom"/>
</dbReference>
<dbReference type="InterPro" id="IPR006073">
    <property type="entry name" value="GTP-bd"/>
</dbReference>
<dbReference type="InterPro" id="IPR019987">
    <property type="entry name" value="GTP-bd_ribosome_bio_YsxC"/>
</dbReference>
<dbReference type="InterPro" id="IPR027417">
    <property type="entry name" value="P-loop_NTPase"/>
</dbReference>
<dbReference type="NCBIfam" id="TIGR03598">
    <property type="entry name" value="GTPase_YsxC"/>
    <property type="match status" value="1"/>
</dbReference>
<dbReference type="PANTHER" id="PTHR11649:SF13">
    <property type="entry name" value="ENGB-TYPE G DOMAIN-CONTAINING PROTEIN"/>
    <property type="match status" value="1"/>
</dbReference>
<dbReference type="PANTHER" id="PTHR11649">
    <property type="entry name" value="MSS1/TRME-RELATED GTP-BINDING PROTEIN"/>
    <property type="match status" value="1"/>
</dbReference>
<dbReference type="Pfam" id="PF01926">
    <property type="entry name" value="MMR_HSR1"/>
    <property type="match status" value="1"/>
</dbReference>
<dbReference type="SUPFAM" id="SSF52540">
    <property type="entry name" value="P-loop containing nucleoside triphosphate hydrolases"/>
    <property type="match status" value="1"/>
</dbReference>
<dbReference type="PROSITE" id="PS51706">
    <property type="entry name" value="G_ENGB"/>
    <property type="match status" value="1"/>
</dbReference>
<keyword id="KW-0131">Cell cycle</keyword>
<keyword id="KW-0132">Cell division</keyword>
<keyword id="KW-0342">GTP-binding</keyword>
<keyword id="KW-0460">Magnesium</keyword>
<keyword id="KW-0479">Metal-binding</keyword>
<keyword id="KW-0547">Nucleotide-binding</keyword>
<keyword id="KW-0717">Septation</keyword>
<proteinExistence type="inferred from homology"/>
<feature type="chain" id="PRO_1000079172" description="Probable GTP-binding protein EngB">
    <location>
        <begin position="1"/>
        <end position="197"/>
    </location>
</feature>
<feature type="domain" description="EngB-type G" evidence="1">
    <location>
        <begin position="22"/>
        <end position="197"/>
    </location>
</feature>
<feature type="binding site" evidence="1">
    <location>
        <begin position="30"/>
        <end position="37"/>
    </location>
    <ligand>
        <name>GTP</name>
        <dbReference type="ChEBI" id="CHEBI:37565"/>
    </ligand>
</feature>
<feature type="binding site" evidence="1">
    <location>
        <position position="37"/>
    </location>
    <ligand>
        <name>Mg(2+)</name>
        <dbReference type="ChEBI" id="CHEBI:18420"/>
    </ligand>
</feature>
<feature type="binding site" evidence="1">
    <location>
        <begin position="57"/>
        <end position="61"/>
    </location>
    <ligand>
        <name>GTP</name>
        <dbReference type="ChEBI" id="CHEBI:37565"/>
    </ligand>
</feature>
<feature type="binding site" evidence="1">
    <location>
        <position position="59"/>
    </location>
    <ligand>
        <name>Mg(2+)</name>
        <dbReference type="ChEBI" id="CHEBI:18420"/>
    </ligand>
</feature>
<feature type="binding site" evidence="1">
    <location>
        <begin position="75"/>
        <end position="78"/>
    </location>
    <ligand>
        <name>GTP</name>
        <dbReference type="ChEBI" id="CHEBI:37565"/>
    </ligand>
</feature>
<feature type="binding site" evidence="1">
    <location>
        <begin position="142"/>
        <end position="145"/>
    </location>
    <ligand>
        <name>GTP</name>
        <dbReference type="ChEBI" id="CHEBI:37565"/>
    </ligand>
</feature>
<feature type="binding site" evidence="1">
    <location>
        <begin position="177"/>
        <end position="179"/>
    </location>
    <ligand>
        <name>GTP</name>
        <dbReference type="ChEBI" id="CHEBI:37565"/>
    </ligand>
</feature>
<sequence length="197" mass="22265">MNYTKAKYIMGAAKVSQLPEDTGVEVAFAGRSNAGKSSALNTLTDQKGLARVSKTPGRTQLINLFDLGDNKRLVDLPGYGYAKVSEAIKKQWQSEMENYLTTRKCLGGIVLLVDSRHELKEFDSLMIEMAISFDLNLHILLTKADKLNNKERAQANKMIESFLKTFIRTDKISYQLFSSLSKMGLDKLKEKLDIWYQ</sequence>
<reference key="1">
    <citation type="submission" date="2007-12" db="EMBL/GenBank/DDBJ databases">
        <title>Complete sequence of chromosome of Francisella philomiragia subsp. philomiragia ATCC 25017.</title>
        <authorList>
            <consortium name="US DOE Joint Genome Institute"/>
            <person name="Copeland A."/>
            <person name="Lucas S."/>
            <person name="Lapidus A."/>
            <person name="Barry K."/>
            <person name="Detter J.C."/>
            <person name="Glavina del Rio T."/>
            <person name="Hammon N."/>
            <person name="Israni S."/>
            <person name="Dalin E."/>
            <person name="Tice H."/>
            <person name="Pitluck S."/>
            <person name="Chain P."/>
            <person name="Malfatti S."/>
            <person name="Shin M."/>
            <person name="Vergez L."/>
            <person name="Schmutz J."/>
            <person name="Larimer F."/>
            <person name="Land M."/>
            <person name="Hauser L."/>
            <person name="Richardson P."/>
        </authorList>
    </citation>
    <scope>NUCLEOTIDE SEQUENCE [LARGE SCALE GENOMIC DNA]</scope>
    <source>
        <strain>ATCC 25017 / CCUG 19701 / FSC 153 / O#319-036</strain>
    </source>
</reference>
<comment type="function">
    <text evidence="1">Necessary for normal cell division and for the maintenance of normal septation.</text>
</comment>
<comment type="cofactor">
    <cofactor evidence="1">
        <name>Mg(2+)</name>
        <dbReference type="ChEBI" id="CHEBI:18420"/>
    </cofactor>
</comment>
<comment type="similarity">
    <text evidence="1">Belongs to the TRAFAC class TrmE-Era-EngA-EngB-Septin-like GTPase superfamily. EngB GTPase family.</text>
</comment>
<gene>
    <name evidence="1" type="primary">engB</name>
    <name type="ordered locus">Fphi_1545</name>
</gene>
<protein>
    <recommendedName>
        <fullName evidence="1">Probable GTP-binding protein EngB</fullName>
    </recommendedName>
</protein>
<name>ENGB_FRAP2</name>
<accession>B0TZB8</accession>